<reference key="1">
    <citation type="journal article" date="2005" name="Science">
        <title>Life at depth: Photobacterium profundum genome sequence and expression analysis.</title>
        <authorList>
            <person name="Vezzi A."/>
            <person name="Campanaro S."/>
            <person name="D'Angelo M."/>
            <person name="Simonato F."/>
            <person name="Vitulo N."/>
            <person name="Lauro F.M."/>
            <person name="Cestaro A."/>
            <person name="Malacrida G."/>
            <person name="Simionati B."/>
            <person name="Cannata N."/>
            <person name="Romualdi C."/>
            <person name="Bartlett D.H."/>
            <person name="Valle G."/>
        </authorList>
    </citation>
    <scope>NUCLEOTIDE SEQUENCE [LARGE SCALE GENOMIC DNA]</scope>
    <source>
        <strain>ATCC BAA-1253 / SS9</strain>
    </source>
</reference>
<keyword id="KW-0975">Bacterial flagellum</keyword>
<keyword id="KW-0574">Periplasm</keyword>
<keyword id="KW-1185">Reference proteome</keyword>
<keyword id="KW-0732">Signal</keyword>
<accession>Q6LTQ6</accession>
<protein>
    <recommendedName>
        <fullName evidence="1">Flagellar P-ring protein 2</fullName>
    </recommendedName>
    <alternativeName>
        <fullName evidence="1">Basal body P-ring protein 2</fullName>
    </alternativeName>
</protein>
<dbReference type="EMBL" id="CR378665">
    <property type="protein sequence ID" value="CAG19319.1"/>
    <property type="molecule type" value="Genomic_DNA"/>
</dbReference>
<dbReference type="SMR" id="Q6LTQ6"/>
<dbReference type="STRING" id="298386.PBPRA0908"/>
<dbReference type="KEGG" id="ppr:PBPRA0908"/>
<dbReference type="eggNOG" id="COG1706">
    <property type="taxonomic scope" value="Bacteria"/>
</dbReference>
<dbReference type="HOGENOM" id="CLU_045235_1_0_6"/>
<dbReference type="Proteomes" id="UP000000593">
    <property type="component" value="Chromosome 1"/>
</dbReference>
<dbReference type="GO" id="GO:0009428">
    <property type="term" value="C:bacterial-type flagellum basal body, distal rod, P ring"/>
    <property type="evidence" value="ECO:0007669"/>
    <property type="project" value="InterPro"/>
</dbReference>
<dbReference type="GO" id="GO:0030288">
    <property type="term" value="C:outer membrane-bounded periplasmic space"/>
    <property type="evidence" value="ECO:0007669"/>
    <property type="project" value="InterPro"/>
</dbReference>
<dbReference type="GO" id="GO:0005198">
    <property type="term" value="F:structural molecule activity"/>
    <property type="evidence" value="ECO:0007669"/>
    <property type="project" value="InterPro"/>
</dbReference>
<dbReference type="GO" id="GO:0071973">
    <property type="term" value="P:bacterial-type flagellum-dependent cell motility"/>
    <property type="evidence" value="ECO:0007669"/>
    <property type="project" value="InterPro"/>
</dbReference>
<dbReference type="HAMAP" id="MF_00416">
    <property type="entry name" value="FlgI"/>
    <property type="match status" value="1"/>
</dbReference>
<dbReference type="InterPro" id="IPR001782">
    <property type="entry name" value="Flag_FlgI"/>
</dbReference>
<dbReference type="NCBIfam" id="NF003676">
    <property type="entry name" value="PRK05303.1"/>
    <property type="match status" value="1"/>
</dbReference>
<dbReference type="PANTHER" id="PTHR30381">
    <property type="entry name" value="FLAGELLAR P-RING PERIPLASMIC PROTEIN FLGI"/>
    <property type="match status" value="1"/>
</dbReference>
<dbReference type="PANTHER" id="PTHR30381:SF0">
    <property type="entry name" value="FLAGELLAR P-RING PROTEIN"/>
    <property type="match status" value="1"/>
</dbReference>
<dbReference type="Pfam" id="PF02119">
    <property type="entry name" value="FlgI"/>
    <property type="match status" value="1"/>
</dbReference>
<dbReference type="PRINTS" id="PR01010">
    <property type="entry name" value="FLGPRINGFLGI"/>
</dbReference>
<evidence type="ECO:0000255" key="1">
    <source>
        <dbReference type="HAMAP-Rule" id="MF_00416"/>
    </source>
</evidence>
<organism>
    <name type="scientific">Photobacterium profundum (strain SS9)</name>
    <dbReference type="NCBI Taxonomy" id="298386"/>
    <lineage>
        <taxon>Bacteria</taxon>
        <taxon>Pseudomonadati</taxon>
        <taxon>Pseudomonadota</taxon>
        <taxon>Gammaproteobacteria</taxon>
        <taxon>Vibrionales</taxon>
        <taxon>Vibrionaceae</taxon>
        <taxon>Photobacterium</taxon>
    </lineage>
</organism>
<sequence>MKLRTCCISLMLLLALPLQAARIKDVSEVAGVRSNQLVGYGLVVGLPGTGETTPFTDQSFNAMLQNFGIQLPAGTKPKTKNVAAVAVNATLPAFTKQGQKIDITVSSIGSAKSLRGGTLLQTFLKGLDGKVYAVAQGSLVVGGFSVTGADGSKLVGNIPTVGRISNGAMVEQEVPNPFGRGDFLTFNLFESDFSTAQRLADAVNEFLGPEMAAAIDATSVRVRAPRDVSQRVAFLATVENIEFDPAVGAAKIIVNSRTGTIVIGQNVKLKPAAITHGGMTVSIKENYQVSQPAPFSGGETVVVPNSEIEVTEKDSRMFKFEPGVTLDELVRAVNQVGAAPSDLMAILQALKQAGAIEGQLIII</sequence>
<gene>
    <name evidence="1" type="primary">flgI2</name>
    <name type="ordered locus">PBPRA0908</name>
</gene>
<comment type="function">
    <text evidence="1">Assembles around the rod to form the L-ring and probably protects the motor/basal body from shearing forces during rotation.</text>
</comment>
<comment type="subunit">
    <text evidence="1">The basal body constitutes a major portion of the flagellar organelle and consists of four rings (L,P,S, and M) mounted on a central rod.</text>
</comment>
<comment type="subcellular location">
    <subcellularLocation>
        <location evidence="1">Periplasm</location>
    </subcellularLocation>
    <subcellularLocation>
        <location evidence="1">Bacterial flagellum basal body</location>
    </subcellularLocation>
</comment>
<comment type="similarity">
    <text evidence="1">Belongs to the FlgI family.</text>
</comment>
<feature type="signal peptide" evidence="1">
    <location>
        <begin position="1"/>
        <end position="20"/>
    </location>
</feature>
<feature type="chain" id="PRO_0000041802" description="Flagellar P-ring protein 2">
    <location>
        <begin position="21"/>
        <end position="363"/>
    </location>
</feature>
<proteinExistence type="inferred from homology"/>
<name>FLGI2_PHOPR</name>